<organism>
    <name type="scientific">Xenopus tropicalis</name>
    <name type="common">Western clawed frog</name>
    <name type="synonym">Silurana tropicalis</name>
    <dbReference type="NCBI Taxonomy" id="8364"/>
    <lineage>
        <taxon>Eukaryota</taxon>
        <taxon>Metazoa</taxon>
        <taxon>Chordata</taxon>
        <taxon>Craniata</taxon>
        <taxon>Vertebrata</taxon>
        <taxon>Euteleostomi</taxon>
        <taxon>Amphibia</taxon>
        <taxon>Batrachia</taxon>
        <taxon>Anura</taxon>
        <taxon>Pipoidea</taxon>
        <taxon>Pipidae</taxon>
        <taxon>Xenopodinae</taxon>
        <taxon>Xenopus</taxon>
        <taxon>Silurana</taxon>
    </lineage>
</organism>
<accession>Q5BKL1</accession>
<dbReference type="EMBL" id="CR762149">
    <property type="protein sequence ID" value="CAJ82494.1"/>
    <property type="molecule type" value="mRNA"/>
</dbReference>
<dbReference type="EMBL" id="BC091034">
    <property type="protein sequence ID" value="AAH91034.1"/>
    <property type="molecule type" value="mRNA"/>
</dbReference>
<dbReference type="SMR" id="Q5BKL1"/>
<dbReference type="FunCoup" id="Q5BKL1">
    <property type="interactions" value="682"/>
</dbReference>
<dbReference type="STRING" id="8364.ENSXETP00000004634"/>
<dbReference type="PaxDb" id="8364-ENSXETP00000003906"/>
<dbReference type="DNASU" id="548853"/>
<dbReference type="KEGG" id="xtr:548853"/>
<dbReference type="AGR" id="Xenbase:XB-GENE-5848800"/>
<dbReference type="CTD" id="102690545"/>
<dbReference type="Xenbase" id="XB-GENE-5848800">
    <property type="gene designation" value="c6h7orf25"/>
</dbReference>
<dbReference type="eggNOG" id="KOG4529">
    <property type="taxonomic scope" value="Eukaryota"/>
</dbReference>
<dbReference type="HOGENOM" id="CLU_054053_0_0_1"/>
<dbReference type="InParanoid" id="Q5BKL1"/>
<dbReference type="OMA" id="HFCMFQR"/>
<dbReference type="OrthoDB" id="441890at2759"/>
<dbReference type="TreeFam" id="TF105980"/>
<dbReference type="Proteomes" id="UP000008143">
    <property type="component" value="Chromosome 6"/>
</dbReference>
<dbReference type="Bgee" id="ENSXETG00000001855">
    <property type="expression patterns" value="Expressed in egg cell and 12 other cell types or tissues"/>
</dbReference>
<dbReference type="InterPro" id="IPR010733">
    <property type="entry name" value="DUF1308"/>
</dbReference>
<dbReference type="InterPro" id="IPR041076">
    <property type="entry name" value="DUF5614"/>
</dbReference>
<dbReference type="PANTHER" id="PTHR13379">
    <property type="entry name" value="UNCHARACTERIZED DUF1308"/>
    <property type="match status" value="1"/>
</dbReference>
<dbReference type="PANTHER" id="PTHR13379:SF0">
    <property type="entry name" value="UPF0415 PROTEIN C7ORF25"/>
    <property type="match status" value="1"/>
</dbReference>
<dbReference type="Pfam" id="PF07000">
    <property type="entry name" value="DUF1308"/>
    <property type="match status" value="1"/>
</dbReference>
<dbReference type="Pfam" id="PF18474">
    <property type="entry name" value="DUF5614"/>
    <property type="match status" value="1"/>
</dbReference>
<gene>
    <name type="ORF">TGas015c11.1</name>
</gene>
<proteinExistence type="evidence at transcript level"/>
<reference key="1">
    <citation type="submission" date="2006-10" db="EMBL/GenBank/DDBJ databases">
        <authorList>
            <consortium name="Sanger Xenopus tropicalis EST/cDNA project"/>
        </authorList>
    </citation>
    <scope>NUCLEOTIDE SEQUENCE [LARGE SCALE MRNA]</scope>
    <source>
        <tissue>Gastrula</tissue>
    </source>
</reference>
<reference key="2">
    <citation type="submission" date="2005-03" db="EMBL/GenBank/DDBJ databases">
        <authorList>
            <consortium name="NIH - Xenopus Gene Collection (XGC) project"/>
        </authorList>
    </citation>
    <scope>NUCLEOTIDE SEQUENCE [LARGE SCALE MRNA]</scope>
</reference>
<comment type="similarity">
    <text evidence="1">Belongs to the UPF0415 family.</text>
</comment>
<feature type="chain" id="PRO_0000279534" description="UPF0415 protein C7orf25 homolog">
    <location>
        <begin position="1"/>
        <end position="424"/>
    </location>
</feature>
<evidence type="ECO:0000305" key="1"/>
<protein>
    <recommendedName>
        <fullName>UPF0415 protein C7orf25 homolog</fullName>
    </recommendedName>
</protein>
<name>CG025_XENTR</name>
<keyword id="KW-1185">Reference proteome</keyword>
<sequence length="424" mass="46384">MSVDSMLCDRIDIAKQLIKRAEALSRSRVGGVEGGAKLCSKLRAELKFLQKVETGKVAIKESHLRSTNLTHLQAVIESAESLEEVVSVLHVFCYNDQFGEKQSLVVDVVANSGHTWVKAIGRKAEALHNIWLGRGQYGDKSIIEQAEDFLQASSQQPVQYSSPHIIFAFYNSVSKPMAEKLKEMGISVRGDIVAVNVSQENSPEENYLSGSESDCDGDDTSVLHVSKVDSENIVASIAFPTEIKVEVCKRVNLDITTLITYVSALSHGGCEWIFKEKVLTEQAAQERQEKVLPLLNSFMEAKELFACECAVKDFQSILETLGGPAEKERAASLVKRITVVPDQPSERALQLASSSKINSRSISIFGTGESLKAITMTANSGFVRAAANQGVKFSVFIHQPRALTESKESSATPLPNNYISSNQL</sequence>